<proteinExistence type="evidence at protein level"/>
<keyword id="KW-0056">Arginine metabolism</keyword>
<keyword id="KW-0378">Hydrolase</keyword>
<keyword id="KW-0464">Manganese</keyword>
<keyword id="KW-0479">Metal-binding</keyword>
<comment type="catalytic activity">
    <reaction evidence="1">
        <text>L-arginine + H2O = urea + L-ornithine</text>
        <dbReference type="Rhea" id="RHEA:20569"/>
        <dbReference type="ChEBI" id="CHEBI:15377"/>
        <dbReference type="ChEBI" id="CHEBI:16199"/>
        <dbReference type="ChEBI" id="CHEBI:32682"/>
        <dbReference type="ChEBI" id="CHEBI:46911"/>
        <dbReference type="EC" id="3.5.3.1"/>
    </reaction>
</comment>
<comment type="cofactor">
    <cofactor evidence="3">
        <name>Mn(2+)</name>
        <dbReference type="ChEBI" id="CHEBI:29035"/>
    </cofactor>
    <text evidence="3">Binds 2 manganese ions per subunit.</text>
</comment>
<comment type="pathway">
    <text evidence="1">Nitrogen metabolism; urea cycle; L-ornithine and urea from L-arginine: step 1/1.</text>
</comment>
<comment type="similarity">
    <text evidence="3">Belongs to the arginase family.</text>
</comment>
<reference key="1">
    <citation type="journal article" date="2001" name="Lancet">
        <title>Whole genome sequencing of meticillin-resistant Staphylococcus aureus.</title>
        <authorList>
            <person name="Kuroda M."/>
            <person name="Ohta T."/>
            <person name="Uchiyama I."/>
            <person name="Baba T."/>
            <person name="Yuzawa H."/>
            <person name="Kobayashi I."/>
            <person name="Cui L."/>
            <person name="Oguchi A."/>
            <person name="Aoki K."/>
            <person name="Nagai Y."/>
            <person name="Lian J.-Q."/>
            <person name="Ito T."/>
            <person name="Kanamori M."/>
            <person name="Matsumaru H."/>
            <person name="Maruyama A."/>
            <person name="Murakami H."/>
            <person name="Hosoyama A."/>
            <person name="Mizutani-Ui Y."/>
            <person name="Takahashi N.K."/>
            <person name="Sawano T."/>
            <person name="Inoue R."/>
            <person name="Kaito C."/>
            <person name="Sekimizu K."/>
            <person name="Hirakawa H."/>
            <person name="Kuhara S."/>
            <person name="Goto S."/>
            <person name="Yabuzaki J."/>
            <person name="Kanehisa M."/>
            <person name="Yamashita A."/>
            <person name="Oshima K."/>
            <person name="Furuya K."/>
            <person name="Yoshino C."/>
            <person name="Shiba T."/>
            <person name="Hattori M."/>
            <person name="Ogasawara N."/>
            <person name="Hayashi H."/>
            <person name="Hiramatsu K."/>
        </authorList>
    </citation>
    <scope>NUCLEOTIDE SEQUENCE [LARGE SCALE GENOMIC DNA]</scope>
    <source>
        <strain>N315</strain>
    </source>
</reference>
<reference key="2">
    <citation type="journal article" date="2005" name="J. Microbiol. Methods">
        <title>Correlation of proteomic and transcriptomic profiles of Staphylococcus aureus during the post-exponential phase of growth.</title>
        <authorList>
            <person name="Scherl A."/>
            <person name="Francois P."/>
            <person name="Bento M."/>
            <person name="Deshusses J.M."/>
            <person name="Charbonnier Y."/>
            <person name="Converset V."/>
            <person name="Huyghe A."/>
            <person name="Walter N."/>
            <person name="Hoogland C."/>
            <person name="Appel R.D."/>
            <person name="Sanchez J.-C."/>
            <person name="Zimmermann-Ivol C.G."/>
            <person name="Corthals G.L."/>
            <person name="Hochstrasser D.F."/>
            <person name="Schrenzel J."/>
        </authorList>
    </citation>
    <scope>IDENTIFICATION BY MASS SPECTROMETRY</scope>
    <source>
        <strain>N315</strain>
    </source>
</reference>
<reference key="3">
    <citation type="submission" date="2007-10" db="UniProtKB">
        <title>Shotgun proteomic analysis of total and membrane protein extracts of S. aureus strain N315.</title>
        <authorList>
            <person name="Vaezzadeh A.R."/>
            <person name="Deshusses J."/>
            <person name="Lescuyer P."/>
            <person name="Hochstrasser D.F."/>
        </authorList>
    </citation>
    <scope>IDENTIFICATION BY MASS SPECTROMETRY [LARGE SCALE ANALYSIS]</scope>
    <source>
        <strain>N315</strain>
    </source>
</reference>
<evidence type="ECO:0000250" key="1">
    <source>
        <dbReference type="UniProtKB" id="P05089"/>
    </source>
</evidence>
<evidence type="ECO:0000250" key="2">
    <source>
        <dbReference type="UniProtKB" id="P53608"/>
    </source>
</evidence>
<evidence type="ECO:0000255" key="3">
    <source>
        <dbReference type="PROSITE-ProRule" id="PRU00742"/>
    </source>
</evidence>
<protein>
    <recommendedName>
        <fullName>Arginase</fullName>
        <ecNumber evidence="1">3.5.3.1</ecNumber>
    </recommendedName>
</protein>
<name>ARGI_STAAN</name>
<accession>P60088</accession>
<accession>Q9R2U3</accession>
<feature type="chain" id="PRO_0000173721" description="Arginase">
    <location>
        <begin position="1"/>
        <end position="302"/>
    </location>
</feature>
<feature type="binding site" evidence="3">
    <location>
        <position position="103"/>
    </location>
    <ligand>
        <name>Mn(2+)</name>
        <dbReference type="ChEBI" id="CHEBI:29035"/>
        <label>1</label>
    </ligand>
</feature>
<feature type="binding site" evidence="3">
    <location>
        <position position="126"/>
    </location>
    <ligand>
        <name>Mn(2+)</name>
        <dbReference type="ChEBI" id="CHEBI:29035"/>
        <label>1</label>
    </ligand>
</feature>
<feature type="binding site" evidence="3">
    <location>
        <position position="126"/>
    </location>
    <ligand>
        <name>Mn(2+)</name>
        <dbReference type="ChEBI" id="CHEBI:29035"/>
        <label>2</label>
    </ligand>
</feature>
<feature type="binding site" evidence="2">
    <location>
        <begin position="128"/>
        <end position="132"/>
    </location>
    <ligand>
        <name>substrate</name>
    </ligand>
</feature>
<feature type="binding site" evidence="3">
    <location>
        <position position="128"/>
    </location>
    <ligand>
        <name>Mn(2+)</name>
        <dbReference type="ChEBI" id="CHEBI:29035"/>
        <label>2</label>
    </ligand>
</feature>
<feature type="binding site" evidence="3">
    <location>
        <position position="130"/>
    </location>
    <ligand>
        <name>Mn(2+)</name>
        <dbReference type="ChEBI" id="CHEBI:29035"/>
        <label>1</label>
    </ligand>
</feature>
<feature type="binding site" evidence="2">
    <location>
        <begin position="139"/>
        <end position="141"/>
    </location>
    <ligand>
        <name>substrate</name>
    </ligand>
</feature>
<feature type="binding site" evidence="2">
    <location>
        <position position="180"/>
    </location>
    <ligand>
        <name>substrate</name>
    </ligand>
</feature>
<feature type="binding site" evidence="3">
    <location>
        <position position="229"/>
    </location>
    <ligand>
        <name>Mn(2+)</name>
        <dbReference type="ChEBI" id="CHEBI:29035"/>
        <label>1</label>
    </ligand>
</feature>
<feature type="binding site" evidence="3">
    <location>
        <position position="229"/>
    </location>
    <ligand>
        <name>Mn(2+)</name>
        <dbReference type="ChEBI" id="CHEBI:29035"/>
        <label>2</label>
    </ligand>
</feature>
<feature type="binding site" evidence="3">
    <location>
        <position position="231"/>
    </location>
    <ligand>
        <name>Mn(2+)</name>
        <dbReference type="ChEBI" id="CHEBI:29035"/>
        <label>2</label>
    </ligand>
</feature>
<feature type="binding site" evidence="2">
    <location>
        <position position="243"/>
    </location>
    <ligand>
        <name>substrate</name>
    </ligand>
</feature>
<feature type="binding site" evidence="2">
    <location>
        <position position="274"/>
    </location>
    <ligand>
        <name>substrate</name>
    </ligand>
</feature>
<organism>
    <name type="scientific">Staphylococcus aureus (strain N315)</name>
    <dbReference type="NCBI Taxonomy" id="158879"/>
    <lineage>
        <taxon>Bacteria</taxon>
        <taxon>Bacillati</taxon>
        <taxon>Bacillota</taxon>
        <taxon>Bacilli</taxon>
        <taxon>Bacillales</taxon>
        <taxon>Staphylococcaceae</taxon>
        <taxon>Staphylococcus</taxon>
    </lineage>
</organism>
<gene>
    <name type="primary">arg</name>
    <name type="ordered locus">SA1968</name>
</gene>
<sequence>MTKTKAIDIIGAPSTFGQRKLGVDLGPTAIRYAGLISRLKQLDLDVYDKGDIKVPAVNIEKFHSEQKGLRNYDEIIDVNQKLNKEVSASIENNRFPLVLGGDHSIAVGSVSAISKHYNNLGVIWYDAHGDLNIPEESPSGNIHGMPLRILTGEGPKELLELNSNVIKPENIVLIGMRDLDKGERQFIKDHNIKTFTMSDIDKLGIKEVIENTIEYLKSRNVDGVHLSLDVDALDPLETPGTGTRVLGGLSYRESHFALELLHQSHLISSMDLVEVNPLIDSNNHTAEQAVSLVGTFFGETLL</sequence>
<dbReference type="EC" id="3.5.3.1" evidence="1"/>
<dbReference type="EMBL" id="BA000018">
    <property type="protein sequence ID" value="BAB43257.1"/>
    <property type="molecule type" value="Genomic_DNA"/>
</dbReference>
<dbReference type="PIR" id="H90011">
    <property type="entry name" value="H90011"/>
</dbReference>
<dbReference type="SMR" id="P60088"/>
<dbReference type="EnsemblBacteria" id="BAB43257">
    <property type="protein sequence ID" value="BAB43257"/>
    <property type="gene ID" value="BAB43257"/>
</dbReference>
<dbReference type="KEGG" id="sau:SA1968"/>
<dbReference type="HOGENOM" id="CLU_039478_6_2_9"/>
<dbReference type="UniPathway" id="UPA00158">
    <property type="reaction ID" value="UER00270"/>
</dbReference>
<dbReference type="GO" id="GO:0005737">
    <property type="term" value="C:cytoplasm"/>
    <property type="evidence" value="ECO:0007669"/>
    <property type="project" value="TreeGrafter"/>
</dbReference>
<dbReference type="GO" id="GO:0004053">
    <property type="term" value="F:arginase activity"/>
    <property type="evidence" value="ECO:0007669"/>
    <property type="project" value="UniProtKB-EC"/>
</dbReference>
<dbReference type="GO" id="GO:0030145">
    <property type="term" value="F:manganese ion binding"/>
    <property type="evidence" value="ECO:0007669"/>
    <property type="project" value="TreeGrafter"/>
</dbReference>
<dbReference type="GO" id="GO:0019547">
    <property type="term" value="P:arginine catabolic process to ornithine"/>
    <property type="evidence" value="ECO:0007669"/>
    <property type="project" value="TreeGrafter"/>
</dbReference>
<dbReference type="GO" id="GO:0000050">
    <property type="term" value="P:urea cycle"/>
    <property type="evidence" value="ECO:0007669"/>
    <property type="project" value="UniProtKB-UniPathway"/>
</dbReference>
<dbReference type="CDD" id="cd09989">
    <property type="entry name" value="Arginase"/>
    <property type="match status" value="1"/>
</dbReference>
<dbReference type="FunFam" id="3.40.800.10:FF:000005">
    <property type="entry name" value="Arginase"/>
    <property type="match status" value="1"/>
</dbReference>
<dbReference type="Gene3D" id="3.40.800.10">
    <property type="entry name" value="Ureohydrolase domain"/>
    <property type="match status" value="1"/>
</dbReference>
<dbReference type="InterPro" id="IPR014033">
    <property type="entry name" value="Arginase"/>
</dbReference>
<dbReference type="InterPro" id="IPR006035">
    <property type="entry name" value="Ureohydrolase"/>
</dbReference>
<dbReference type="InterPro" id="IPR023696">
    <property type="entry name" value="Ureohydrolase_dom_sf"/>
</dbReference>
<dbReference type="InterPro" id="IPR020855">
    <property type="entry name" value="Ureohydrolase_Mn_BS"/>
</dbReference>
<dbReference type="NCBIfam" id="TIGR01229">
    <property type="entry name" value="rocF_arginase"/>
    <property type="match status" value="1"/>
</dbReference>
<dbReference type="PANTHER" id="PTHR43782">
    <property type="entry name" value="ARGINASE"/>
    <property type="match status" value="1"/>
</dbReference>
<dbReference type="PANTHER" id="PTHR43782:SF3">
    <property type="entry name" value="ARGINASE"/>
    <property type="match status" value="1"/>
</dbReference>
<dbReference type="Pfam" id="PF00491">
    <property type="entry name" value="Arginase"/>
    <property type="match status" value="1"/>
</dbReference>
<dbReference type="PIRSF" id="PIRSF036979">
    <property type="entry name" value="Arginase"/>
    <property type="match status" value="1"/>
</dbReference>
<dbReference type="PRINTS" id="PR00116">
    <property type="entry name" value="ARGINASE"/>
</dbReference>
<dbReference type="SUPFAM" id="SSF52768">
    <property type="entry name" value="Arginase/deacetylase"/>
    <property type="match status" value="1"/>
</dbReference>
<dbReference type="PROSITE" id="PS01053">
    <property type="entry name" value="ARGINASE_1"/>
    <property type="match status" value="1"/>
</dbReference>
<dbReference type="PROSITE" id="PS51409">
    <property type="entry name" value="ARGINASE_2"/>
    <property type="match status" value="1"/>
</dbReference>